<comment type="function">
    <text evidence="1">Catalyzes the conversion of 4-hydroxy-tetrahydrodipicolinate (HTPA) to tetrahydrodipicolinate.</text>
</comment>
<comment type="catalytic activity">
    <reaction evidence="1">
        <text>(S)-2,3,4,5-tetrahydrodipicolinate + NAD(+) + H2O = (2S,4S)-4-hydroxy-2,3,4,5-tetrahydrodipicolinate + NADH + H(+)</text>
        <dbReference type="Rhea" id="RHEA:35323"/>
        <dbReference type="ChEBI" id="CHEBI:15377"/>
        <dbReference type="ChEBI" id="CHEBI:15378"/>
        <dbReference type="ChEBI" id="CHEBI:16845"/>
        <dbReference type="ChEBI" id="CHEBI:57540"/>
        <dbReference type="ChEBI" id="CHEBI:57945"/>
        <dbReference type="ChEBI" id="CHEBI:67139"/>
        <dbReference type="EC" id="1.17.1.8"/>
    </reaction>
</comment>
<comment type="catalytic activity">
    <reaction evidence="1">
        <text>(S)-2,3,4,5-tetrahydrodipicolinate + NADP(+) + H2O = (2S,4S)-4-hydroxy-2,3,4,5-tetrahydrodipicolinate + NADPH + H(+)</text>
        <dbReference type="Rhea" id="RHEA:35331"/>
        <dbReference type="ChEBI" id="CHEBI:15377"/>
        <dbReference type="ChEBI" id="CHEBI:15378"/>
        <dbReference type="ChEBI" id="CHEBI:16845"/>
        <dbReference type="ChEBI" id="CHEBI:57783"/>
        <dbReference type="ChEBI" id="CHEBI:58349"/>
        <dbReference type="ChEBI" id="CHEBI:67139"/>
        <dbReference type="EC" id="1.17.1.8"/>
    </reaction>
</comment>
<comment type="pathway">
    <text evidence="1">Amino-acid biosynthesis; L-lysine biosynthesis via DAP pathway; (S)-tetrahydrodipicolinate from L-aspartate: step 4/4.</text>
</comment>
<comment type="subcellular location">
    <subcellularLocation>
        <location evidence="1">Cytoplasm</location>
    </subcellularLocation>
</comment>
<comment type="similarity">
    <text evidence="1">Belongs to the DapB family.</text>
</comment>
<comment type="caution">
    <text evidence="2">Was originally thought to be a dihydrodipicolinate reductase (DHDPR), catalyzing the conversion of dihydrodipicolinate to tetrahydrodipicolinate. However, it was shown in E.coli that the substrate of the enzymatic reaction is not dihydrodipicolinate (DHDP) but in fact (2S,4S)-4-hydroxy-2,3,4,5-tetrahydrodipicolinic acid (HTPA), the product released by the DapA-catalyzed reaction.</text>
</comment>
<accession>A5GD90</accession>
<protein>
    <recommendedName>
        <fullName evidence="1">4-hydroxy-tetrahydrodipicolinate reductase</fullName>
        <shortName evidence="1">HTPA reductase</shortName>
        <ecNumber evidence="1">1.17.1.8</ecNumber>
    </recommendedName>
</protein>
<name>DAPB_GEOUR</name>
<sequence>MVKIAVCGAAGRMGGRIIAAISETEGAVVSGALERLGHPMVGQDAGFNAGLGAIGVTISDDLTAVVQGCDVLIDFTTPKVSLKNLEVCGLNKKSIVIGSTGFTPEERALAAELAKDIPVVLAPNMSVGVNVCFKVLADVAKILGDDFDVEIVEAHHKMKKDSPSGTAVRMGEVVAEALGRDYNKVANFHREGICGERTKDEIGMQTIRGGDIVGEHTVYFIGMGERIEITHRAHTRDMFSRGSVRAAKWVVSQKPGLYDMQDVLGLR</sequence>
<gene>
    <name evidence="1" type="primary">dapB</name>
    <name type="ordered locus">Gura_0235</name>
</gene>
<reference key="1">
    <citation type="submission" date="2007-05" db="EMBL/GenBank/DDBJ databases">
        <title>Complete sequence of Geobacter uraniireducens Rf4.</title>
        <authorList>
            <consortium name="US DOE Joint Genome Institute"/>
            <person name="Copeland A."/>
            <person name="Lucas S."/>
            <person name="Lapidus A."/>
            <person name="Barry K."/>
            <person name="Detter J.C."/>
            <person name="Glavina del Rio T."/>
            <person name="Hammon N."/>
            <person name="Israni S."/>
            <person name="Dalin E."/>
            <person name="Tice H."/>
            <person name="Pitluck S."/>
            <person name="Chertkov O."/>
            <person name="Brettin T."/>
            <person name="Bruce D."/>
            <person name="Han C."/>
            <person name="Schmutz J."/>
            <person name="Larimer F."/>
            <person name="Land M."/>
            <person name="Hauser L."/>
            <person name="Kyrpides N."/>
            <person name="Mikhailova N."/>
            <person name="Shelobolina E."/>
            <person name="Aklujkar M."/>
            <person name="Lovley D."/>
            <person name="Richardson P."/>
        </authorList>
    </citation>
    <scope>NUCLEOTIDE SEQUENCE [LARGE SCALE GENOMIC DNA]</scope>
    <source>
        <strain>ATCC BAA-1134 / JCM 13001 / Rf4</strain>
    </source>
</reference>
<organism>
    <name type="scientific">Geotalea uraniireducens (strain Rf4)</name>
    <name type="common">Geobacter uraniireducens</name>
    <dbReference type="NCBI Taxonomy" id="351605"/>
    <lineage>
        <taxon>Bacteria</taxon>
        <taxon>Pseudomonadati</taxon>
        <taxon>Thermodesulfobacteriota</taxon>
        <taxon>Desulfuromonadia</taxon>
        <taxon>Geobacterales</taxon>
        <taxon>Geobacteraceae</taxon>
        <taxon>Geotalea</taxon>
    </lineage>
</organism>
<keyword id="KW-0028">Amino-acid biosynthesis</keyword>
<keyword id="KW-0963">Cytoplasm</keyword>
<keyword id="KW-0220">Diaminopimelate biosynthesis</keyword>
<keyword id="KW-0457">Lysine biosynthesis</keyword>
<keyword id="KW-0520">NAD</keyword>
<keyword id="KW-0521">NADP</keyword>
<keyword id="KW-0560">Oxidoreductase</keyword>
<keyword id="KW-1185">Reference proteome</keyword>
<feature type="chain" id="PRO_1000075679" description="4-hydroxy-tetrahydrodipicolinate reductase">
    <location>
        <begin position="1"/>
        <end position="267"/>
    </location>
</feature>
<feature type="active site" description="Proton donor/acceptor" evidence="1">
    <location>
        <position position="155"/>
    </location>
</feature>
<feature type="active site" description="Proton donor" evidence="1">
    <location>
        <position position="159"/>
    </location>
</feature>
<feature type="binding site" evidence="1">
    <location>
        <begin position="8"/>
        <end position="13"/>
    </location>
    <ligand>
        <name>NAD(+)</name>
        <dbReference type="ChEBI" id="CHEBI:57540"/>
    </ligand>
</feature>
<feature type="binding site" evidence="1">
    <location>
        <position position="34"/>
    </location>
    <ligand>
        <name>NAD(+)</name>
        <dbReference type="ChEBI" id="CHEBI:57540"/>
    </ligand>
</feature>
<feature type="binding site" evidence="1">
    <location>
        <position position="35"/>
    </location>
    <ligand>
        <name>NADP(+)</name>
        <dbReference type="ChEBI" id="CHEBI:58349"/>
    </ligand>
</feature>
<feature type="binding site" evidence="1">
    <location>
        <begin position="98"/>
        <end position="100"/>
    </location>
    <ligand>
        <name>NAD(+)</name>
        <dbReference type="ChEBI" id="CHEBI:57540"/>
    </ligand>
</feature>
<feature type="binding site" evidence="1">
    <location>
        <begin position="122"/>
        <end position="125"/>
    </location>
    <ligand>
        <name>NAD(+)</name>
        <dbReference type="ChEBI" id="CHEBI:57540"/>
    </ligand>
</feature>
<feature type="binding site" evidence="1">
    <location>
        <position position="156"/>
    </location>
    <ligand>
        <name>(S)-2,3,4,5-tetrahydrodipicolinate</name>
        <dbReference type="ChEBI" id="CHEBI:16845"/>
    </ligand>
</feature>
<feature type="binding site" evidence="1">
    <location>
        <begin position="165"/>
        <end position="166"/>
    </location>
    <ligand>
        <name>(S)-2,3,4,5-tetrahydrodipicolinate</name>
        <dbReference type="ChEBI" id="CHEBI:16845"/>
    </ligand>
</feature>
<dbReference type="EC" id="1.17.1.8" evidence="1"/>
<dbReference type="EMBL" id="CP000698">
    <property type="protein sequence ID" value="ABQ24451.1"/>
    <property type="molecule type" value="Genomic_DNA"/>
</dbReference>
<dbReference type="RefSeq" id="WP_011937180.1">
    <property type="nucleotide sequence ID" value="NC_009483.1"/>
</dbReference>
<dbReference type="SMR" id="A5GD90"/>
<dbReference type="STRING" id="351605.Gura_0235"/>
<dbReference type="KEGG" id="gur:Gura_0235"/>
<dbReference type="HOGENOM" id="CLU_047479_2_1_7"/>
<dbReference type="OrthoDB" id="9790352at2"/>
<dbReference type="UniPathway" id="UPA00034">
    <property type="reaction ID" value="UER00018"/>
</dbReference>
<dbReference type="Proteomes" id="UP000006695">
    <property type="component" value="Chromosome"/>
</dbReference>
<dbReference type="GO" id="GO:0005829">
    <property type="term" value="C:cytosol"/>
    <property type="evidence" value="ECO:0007669"/>
    <property type="project" value="TreeGrafter"/>
</dbReference>
<dbReference type="GO" id="GO:0008839">
    <property type="term" value="F:4-hydroxy-tetrahydrodipicolinate reductase"/>
    <property type="evidence" value="ECO:0007669"/>
    <property type="project" value="UniProtKB-EC"/>
</dbReference>
<dbReference type="GO" id="GO:0051287">
    <property type="term" value="F:NAD binding"/>
    <property type="evidence" value="ECO:0007669"/>
    <property type="project" value="UniProtKB-UniRule"/>
</dbReference>
<dbReference type="GO" id="GO:0050661">
    <property type="term" value="F:NADP binding"/>
    <property type="evidence" value="ECO:0007669"/>
    <property type="project" value="UniProtKB-UniRule"/>
</dbReference>
<dbReference type="GO" id="GO:0016726">
    <property type="term" value="F:oxidoreductase activity, acting on CH or CH2 groups, NAD or NADP as acceptor"/>
    <property type="evidence" value="ECO:0007669"/>
    <property type="project" value="UniProtKB-UniRule"/>
</dbReference>
<dbReference type="GO" id="GO:0019877">
    <property type="term" value="P:diaminopimelate biosynthetic process"/>
    <property type="evidence" value="ECO:0007669"/>
    <property type="project" value="UniProtKB-UniRule"/>
</dbReference>
<dbReference type="GO" id="GO:0009089">
    <property type="term" value="P:lysine biosynthetic process via diaminopimelate"/>
    <property type="evidence" value="ECO:0007669"/>
    <property type="project" value="UniProtKB-UniRule"/>
</dbReference>
<dbReference type="CDD" id="cd02274">
    <property type="entry name" value="DHDPR_N"/>
    <property type="match status" value="1"/>
</dbReference>
<dbReference type="FunFam" id="3.30.360.10:FF:000004">
    <property type="entry name" value="4-hydroxy-tetrahydrodipicolinate reductase"/>
    <property type="match status" value="1"/>
</dbReference>
<dbReference type="FunFam" id="3.40.50.720:FF:000048">
    <property type="entry name" value="4-hydroxy-tetrahydrodipicolinate reductase"/>
    <property type="match status" value="1"/>
</dbReference>
<dbReference type="Gene3D" id="3.30.360.10">
    <property type="entry name" value="Dihydrodipicolinate Reductase, domain 2"/>
    <property type="match status" value="1"/>
</dbReference>
<dbReference type="Gene3D" id="3.40.50.720">
    <property type="entry name" value="NAD(P)-binding Rossmann-like Domain"/>
    <property type="match status" value="1"/>
</dbReference>
<dbReference type="HAMAP" id="MF_00102">
    <property type="entry name" value="DapB"/>
    <property type="match status" value="1"/>
</dbReference>
<dbReference type="InterPro" id="IPR022663">
    <property type="entry name" value="DapB_C"/>
</dbReference>
<dbReference type="InterPro" id="IPR000846">
    <property type="entry name" value="DapB_N"/>
</dbReference>
<dbReference type="InterPro" id="IPR022664">
    <property type="entry name" value="DapB_N_CS"/>
</dbReference>
<dbReference type="InterPro" id="IPR023940">
    <property type="entry name" value="DHDPR_bac"/>
</dbReference>
<dbReference type="InterPro" id="IPR036291">
    <property type="entry name" value="NAD(P)-bd_dom_sf"/>
</dbReference>
<dbReference type="NCBIfam" id="TIGR00036">
    <property type="entry name" value="dapB"/>
    <property type="match status" value="1"/>
</dbReference>
<dbReference type="PANTHER" id="PTHR20836:SF0">
    <property type="entry name" value="4-HYDROXY-TETRAHYDRODIPICOLINATE REDUCTASE 1, CHLOROPLASTIC-RELATED"/>
    <property type="match status" value="1"/>
</dbReference>
<dbReference type="PANTHER" id="PTHR20836">
    <property type="entry name" value="DIHYDRODIPICOLINATE REDUCTASE"/>
    <property type="match status" value="1"/>
</dbReference>
<dbReference type="Pfam" id="PF05173">
    <property type="entry name" value="DapB_C"/>
    <property type="match status" value="1"/>
</dbReference>
<dbReference type="Pfam" id="PF01113">
    <property type="entry name" value="DapB_N"/>
    <property type="match status" value="1"/>
</dbReference>
<dbReference type="PIRSF" id="PIRSF000161">
    <property type="entry name" value="DHPR"/>
    <property type="match status" value="1"/>
</dbReference>
<dbReference type="SUPFAM" id="SSF55347">
    <property type="entry name" value="Glyceraldehyde-3-phosphate dehydrogenase-like, C-terminal domain"/>
    <property type="match status" value="1"/>
</dbReference>
<dbReference type="SUPFAM" id="SSF51735">
    <property type="entry name" value="NAD(P)-binding Rossmann-fold domains"/>
    <property type="match status" value="1"/>
</dbReference>
<dbReference type="PROSITE" id="PS01298">
    <property type="entry name" value="DAPB"/>
    <property type="match status" value="1"/>
</dbReference>
<proteinExistence type="inferred from homology"/>
<evidence type="ECO:0000255" key="1">
    <source>
        <dbReference type="HAMAP-Rule" id="MF_00102"/>
    </source>
</evidence>
<evidence type="ECO:0000305" key="2"/>